<reference key="1">
    <citation type="journal article" date="2005" name="Nature">
        <title>The genome of the social amoeba Dictyostelium discoideum.</title>
        <authorList>
            <person name="Eichinger L."/>
            <person name="Pachebat J.A."/>
            <person name="Gloeckner G."/>
            <person name="Rajandream M.A."/>
            <person name="Sucgang R."/>
            <person name="Berriman M."/>
            <person name="Song J."/>
            <person name="Olsen R."/>
            <person name="Szafranski K."/>
            <person name="Xu Q."/>
            <person name="Tunggal B."/>
            <person name="Kummerfeld S."/>
            <person name="Madera M."/>
            <person name="Konfortov B.A."/>
            <person name="Rivero F."/>
            <person name="Bankier A.T."/>
            <person name="Lehmann R."/>
            <person name="Hamlin N."/>
            <person name="Davies R."/>
            <person name="Gaudet P."/>
            <person name="Fey P."/>
            <person name="Pilcher K."/>
            <person name="Chen G."/>
            <person name="Saunders D."/>
            <person name="Sodergren E.J."/>
            <person name="Davis P."/>
            <person name="Kerhornou A."/>
            <person name="Nie X."/>
            <person name="Hall N."/>
            <person name="Anjard C."/>
            <person name="Hemphill L."/>
            <person name="Bason N."/>
            <person name="Farbrother P."/>
            <person name="Desany B."/>
            <person name="Just E."/>
            <person name="Morio T."/>
            <person name="Rost R."/>
            <person name="Churcher C.M."/>
            <person name="Cooper J."/>
            <person name="Haydock S."/>
            <person name="van Driessche N."/>
            <person name="Cronin A."/>
            <person name="Goodhead I."/>
            <person name="Muzny D.M."/>
            <person name="Mourier T."/>
            <person name="Pain A."/>
            <person name="Lu M."/>
            <person name="Harper D."/>
            <person name="Lindsay R."/>
            <person name="Hauser H."/>
            <person name="James K.D."/>
            <person name="Quiles M."/>
            <person name="Madan Babu M."/>
            <person name="Saito T."/>
            <person name="Buchrieser C."/>
            <person name="Wardroper A."/>
            <person name="Felder M."/>
            <person name="Thangavelu M."/>
            <person name="Johnson D."/>
            <person name="Knights A."/>
            <person name="Loulseged H."/>
            <person name="Mungall K.L."/>
            <person name="Oliver K."/>
            <person name="Price C."/>
            <person name="Quail M.A."/>
            <person name="Urushihara H."/>
            <person name="Hernandez J."/>
            <person name="Rabbinowitsch E."/>
            <person name="Steffen D."/>
            <person name="Sanders M."/>
            <person name="Ma J."/>
            <person name="Kohara Y."/>
            <person name="Sharp S."/>
            <person name="Simmonds M.N."/>
            <person name="Spiegler S."/>
            <person name="Tivey A."/>
            <person name="Sugano S."/>
            <person name="White B."/>
            <person name="Walker D."/>
            <person name="Woodward J.R."/>
            <person name="Winckler T."/>
            <person name="Tanaka Y."/>
            <person name="Shaulsky G."/>
            <person name="Schleicher M."/>
            <person name="Weinstock G.M."/>
            <person name="Rosenthal A."/>
            <person name="Cox E.C."/>
            <person name="Chisholm R.L."/>
            <person name="Gibbs R.A."/>
            <person name="Loomis W.F."/>
            <person name="Platzer M."/>
            <person name="Kay R.R."/>
            <person name="Williams J.G."/>
            <person name="Dear P.H."/>
            <person name="Noegel A.A."/>
            <person name="Barrell B.G."/>
            <person name="Kuspa A."/>
        </authorList>
    </citation>
    <scope>NUCLEOTIDE SEQUENCE [LARGE SCALE GENOMIC DNA]</scope>
    <source>
        <strain>AX4</strain>
    </source>
</reference>
<reference key="2">
    <citation type="journal article" date="2008" name="Langmuir">
        <title>Minimal F-actin cytoskeletal system for planar supported phospholipid bilayers.</title>
        <authorList>
            <person name="Barfoot R.J."/>
            <person name="Sheikh K.H."/>
            <person name="Johnson B.R."/>
            <person name="Colyer J."/>
            <person name="Miles R.E."/>
            <person name="Jeuken L.J."/>
            <person name="Bushby R.J."/>
            <person name="Evans S.D."/>
        </authorList>
    </citation>
    <scope>FUNCTION</scope>
</reference>
<proteinExistence type="inferred from homology"/>
<name>PONC5_DICDI</name>
<feature type="signal peptide" evidence="1">
    <location>
        <begin position="1"/>
        <end position="20"/>
    </location>
</feature>
<feature type="chain" id="PRO_0000312142" description="Ponticulin-like protein C5">
    <location>
        <begin position="21"/>
        <end position="118"/>
    </location>
</feature>
<feature type="propeptide" id="PRO_0000312143" description="Removed in mature form" evidence="1">
    <location>
        <begin position="119"/>
        <end position="147"/>
    </location>
</feature>
<feature type="lipid moiety-binding region" description="GPI-like-anchor amidated asparagine" evidence="1">
    <location>
        <position position="118"/>
    </location>
</feature>
<feature type="glycosylation site" description="N-linked (GlcNAc...) asparagine" evidence="1">
    <location>
        <position position="118"/>
    </location>
</feature>
<organism>
    <name type="scientific">Dictyostelium discoideum</name>
    <name type="common">Social amoeba</name>
    <dbReference type="NCBI Taxonomy" id="44689"/>
    <lineage>
        <taxon>Eukaryota</taxon>
        <taxon>Amoebozoa</taxon>
        <taxon>Evosea</taxon>
        <taxon>Eumycetozoa</taxon>
        <taxon>Dictyostelia</taxon>
        <taxon>Dictyosteliales</taxon>
        <taxon>Dictyosteliaceae</taxon>
        <taxon>Dictyostelium</taxon>
    </lineage>
</organism>
<keyword id="KW-1003">Cell membrane</keyword>
<keyword id="KW-0325">Glycoprotein</keyword>
<keyword id="KW-0336">GPI-anchor</keyword>
<keyword id="KW-0449">Lipoprotein</keyword>
<keyword id="KW-0472">Membrane</keyword>
<keyword id="KW-1185">Reference proteome</keyword>
<keyword id="KW-0732">Signal</keyword>
<comment type="subcellular location">
    <subcellularLocation>
        <location evidence="2">Cell membrane</location>
        <topology evidence="2">Lipid-anchor</topology>
        <topology evidence="2">GPI-anchor</topology>
    </subcellularLocation>
</comment>
<comment type="PTM">
    <text>The GPI-like-anchor contains a phosphoceramide group, rather than a phosphatidyl group.</text>
</comment>
<comment type="similarity">
    <text evidence="2">Belongs to the ponticulin family.</text>
</comment>
<comment type="caution">
    <text evidence="2">The Dictyosteliida are known to produce a glycosylsphingolipidinositol anchor (GPI-like-anchor). It has not been established whether Dictyosteliida make a glycosylphosphatidylinositol anchor (GPI-anchor) also, and whether their GPI-like-anchor modifications can be interconverted with GPI-anchor modifications in a resculpting process. It has not been established that the GPI-like-anchor modification in Dictyosteliida utilizes the same sequence motif.</text>
</comment>
<comment type="caution">
    <text evidence="2">Different sequence motifs predict both the N-glycosylation modification and the GPI- or GPI-like anchor modification for Asn-118. While it is chemically possible for both modifications to occur, it is not known whether it is enzymatically possible.</text>
</comment>
<evidence type="ECO:0000255" key="1"/>
<evidence type="ECO:0000305" key="2"/>
<dbReference type="EMBL" id="AAFI02000089">
    <property type="protein sequence ID" value="EAL64117.1"/>
    <property type="molecule type" value="Genomic_DNA"/>
</dbReference>
<dbReference type="RefSeq" id="XP_637642.1">
    <property type="nucleotide sequence ID" value="XM_632550.1"/>
</dbReference>
<dbReference type="FunCoup" id="Q54LB9">
    <property type="interactions" value="698"/>
</dbReference>
<dbReference type="STRING" id="44689.Q54LB9"/>
<dbReference type="GlyCosmos" id="Q54LB9">
    <property type="glycosylation" value="1 site, No reported glycans"/>
</dbReference>
<dbReference type="GlyGen" id="Q54LB9">
    <property type="glycosylation" value="2 sites"/>
</dbReference>
<dbReference type="PaxDb" id="44689-DDB0232290"/>
<dbReference type="EnsemblProtists" id="EAL64117">
    <property type="protein sequence ID" value="EAL64117"/>
    <property type="gene ID" value="DDB_G0286723"/>
</dbReference>
<dbReference type="GeneID" id="8625783"/>
<dbReference type="KEGG" id="ddi:DDB_G0286723"/>
<dbReference type="dictyBase" id="DDB_G0286723">
    <property type="gene designation" value="ponC5"/>
</dbReference>
<dbReference type="VEuPathDB" id="AmoebaDB:DDB_G0286719"/>
<dbReference type="HOGENOM" id="CLU_1771535_0_0_1"/>
<dbReference type="InParanoid" id="Q54LB9"/>
<dbReference type="PhylomeDB" id="Q54LB9"/>
<dbReference type="PRO" id="PR:Q54LB9"/>
<dbReference type="Proteomes" id="UP000002195">
    <property type="component" value="Chromosome 4"/>
</dbReference>
<dbReference type="GO" id="GO:0042599">
    <property type="term" value="C:lamellar body"/>
    <property type="evidence" value="ECO:0007005"/>
    <property type="project" value="dictyBase"/>
</dbReference>
<dbReference type="GO" id="GO:0016020">
    <property type="term" value="C:membrane"/>
    <property type="evidence" value="ECO:0000250"/>
    <property type="project" value="dictyBase"/>
</dbReference>
<dbReference type="GO" id="GO:0005886">
    <property type="term" value="C:plasma membrane"/>
    <property type="evidence" value="ECO:0007669"/>
    <property type="project" value="UniProtKB-SubCell"/>
</dbReference>
<dbReference type="GO" id="GO:0098552">
    <property type="term" value="C:side of membrane"/>
    <property type="evidence" value="ECO:0007669"/>
    <property type="project" value="UniProtKB-KW"/>
</dbReference>
<dbReference type="GO" id="GO:0051015">
    <property type="term" value="F:actin filament binding"/>
    <property type="evidence" value="ECO:0000250"/>
    <property type="project" value="dictyBase"/>
</dbReference>
<accession>Q54LB9</accession>
<sequence>MKLNNSLLLLIVAIIASSNAAETFSNFQVTNSEASSPCVTTPVELKVNTCQSACDSILNVLPVTGSTSKFTFNQFGAQDTKCAATPTSSNEFTCVDGKSKVAIGTTTYSVVCVPDKTNSSESDSSDSTRIGASFALFALALLSMLAL</sequence>
<gene>
    <name type="primary">ponC5</name>
    <name type="ORF">DDB_G0286723</name>
</gene>
<protein>
    <recommendedName>
        <fullName>Ponticulin-like protein C5</fullName>
    </recommendedName>
</protein>